<feature type="chain" id="PRO_0000317103" description="Adenylate cyclase type 10">
    <location>
        <begin position="1"/>
        <end position="1610"/>
    </location>
</feature>
<feature type="domain" description="Guanylate cyclase 1" evidence="3">
    <location>
        <begin position="42"/>
        <end position="179"/>
    </location>
</feature>
<feature type="domain" description="Guanylate cyclase 2" evidence="3">
    <location>
        <begin position="293"/>
        <end position="418"/>
    </location>
</feature>
<feature type="binding site" evidence="2">
    <location>
        <begin position="47"/>
        <end position="52"/>
    </location>
    <ligand>
        <name>ATP</name>
        <dbReference type="ChEBI" id="CHEBI:30616"/>
    </ligand>
</feature>
<feature type="binding site" evidence="3">
    <location>
        <position position="47"/>
    </location>
    <ligand>
        <name>Mg(2+)</name>
        <dbReference type="ChEBI" id="CHEBI:18420"/>
        <label>1</label>
    </ligand>
</feature>
<feature type="binding site" evidence="3">
    <location>
        <position position="47"/>
    </location>
    <ligand>
        <name>Mg(2+)</name>
        <dbReference type="ChEBI" id="CHEBI:18420"/>
        <label>2</label>
    </ligand>
</feature>
<feature type="binding site" evidence="3">
    <location>
        <position position="48"/>
    </location>
    <ligand>
        <name>Mg(2+)</name>
        <dbReference type="ChEBI" id="CHEBI:18420"/>
        <label>2</label>
    </ligand>
</feature>
<feature type="binding site" evidence="2">
    <location>
        <position position="95"/>
    </location>
    <ligand>
        <name>hydrogencarbonate</name>
        <dbReference type="ChEBI" id="CHEBI:17544"/>
    </ligand>
</feature>
<feature type="binding site" evidence="2">
    <location>
        <position position="99"/>
    </location>
    <ligand>
        <name>ATP</name>
        <dbReference type="ChEBI" id="CHEBI:30616"/>
    </ligand>
</feature>
<feature type="binding site" evidence="3">
    <location>
        <position position="99"/>
    </location>
    <ligand>
        <name>Mg(2+)</name>
        <dbReference type="ChEBI" id="CHEBI:18420"/>
        <label>1</label>
    </ligand>
</feature>
<feature type="binding site" evidence="3">
    <location>
        <position position="99"/>
    </location>
    <ligand>
        <name>Mg(2+)</name>
        <dbReference type="ChEBI" id="CHEBI:18420"/>
        <label>2</label>
    </ligand>
</feature>
<feature type="binding site" evidence="2">
    <location>
        <position position="144"/>
    </location>
    <ligand>
        <name>ATP</name>
        <dbReference type="ChEBI" id="CHEBI:30616"/>
    </ligand>
</feature>
<feature type="binding site" evidence="2">
    <location>
        <position position="167"/>
    </location>
    <ligand>
        <name>hydrogencarbonate</name>
        <dbReference type="ChEBI" id="CHEBI:17544"/>
    </ligand>
</feature>
<feature type="binding site" evidence="2">
    <location>
        <position position="176"/>
    </location>
    <ligand>
        <name>hydrogencarbonate</name>
        <dbReference type="ChEBI" id="CHEBI:17544"/>
    </ligand>
</feature>
<feature type="binding site" evidence="2">
    <location>
        <position position="337"/>
    </location>
    <ligand>
        <name>hydrogencarbonate</name>
        <dbReference type="ChEBI" id="CHEBI:17544"/>
    </ligand>
</feature>
<feature type="binding site" evidence="2">
    <location>
        <position position="406"/>
    </location>
    <ligand>
        <name>ATP</name>
        <dbReference type="ChEBI" id="CHEBI:30616"/>
    </ligand>
</feature>
<feature type="binding site" evidence="2">
    <location>
        <begin position="412"/>
        <end position="416"/>
    </location>
    <ligand>
        <name>ATP</name>
        <dbReference type="ChEBI" id="CHEBI:30616"/>
    </ligand>
</feature>
<accession>Q866F4</accession>
<organism>
    <name type="scientific">Oryctolagus cuniculus</name>
    <name type="common">Rabbit</name>
    <dbReference type="NCBI Taxonomy" id="9986"/>
    <lineage>
        <taxon>Eukaryota</taxon>
        <taxon>Metazoa</taxon>
        <taxon>Chordata</taxon>
        <taxon>Craniata</taxon>
        <taxon>Vertebrata</taxon>
        <taxon>Euteleostomi</taxon>
        <taxon>Mammalia</taxon>
        <taxon>Eutheria</taxon>
        <taxon>Euarchontoglires</taxon>
        <taxon>Glires</taxon>
        <taxon>Lagomorpha</taxon>
        <taxon>Leporidae</taxon>
        <taxon>Oryctolagus</taxon>
    </lineage>
</organism>
<dbReference type="EC" id="4.6.1.1"/>
<dbReference type="EMBL" id="AY212921">
    <property type="protein sequence ID" value="AAO38673.1"/>
    <property type="molecule type" value="mRNA"/>
</dbReference>
<dbReference type="RefSeq" id="NP_001075622.1">
    <property type="nucleotide sequence ID" value="NM_001082153.1"/>
</dbReference>
<dbReference type="SMR" id="Q866F4"/>
<dbReference type="FunCoup" id="Q866F4">
    <property type="interactions" value="16"/>
</dbReference>
<dbReference type="STRING" id="9986.ENSOCUP00000001957"/>
<dbReference type="PaxDb" id="9986-ENSOCUP00000001957"/>
<dbReference type="GeneID" id="100008902"/>
<dbReference type="KEGG" id="ocu:100008902"/>
<dbReference type="CTD" id="55811"/>
<dbReference type="eggNOG" id="ENOG502QPPT">
    <property type="taxonomic scope" value="Eukaryota"/>
</dbReference>
<dbReference type="InParanoid" id="Q866F4"/>
<dbReference type="OrthoDB" id="194468at2759"/>
<dbReference type="Proteomes" id="UP000001811">
    <property type="component" value="Unplaced"/>
</dbReference>
<dbReference type="GO" id="GO:0005929">
    <property type="term" value="C:cilium"/>
    <property type="evidence" value="ECO:0007669"/>
    <property type="project" value="UniProtKB-SubCell"/>
</dbReference>
<dbReference type="GO" id="GO:0005856">
    <property type="term" value="C:cytoskeleton"/>
    <property type="evidence" value="ECO:0007669"/>
    <property type="project" value="UniProtKB-SubCell"/>
</dbReference>
<dbReference type="GO" id="GO:0005576">
    <property type="term" value="C:extracellular region"/>
    <property type="evidence" value="ECO:0007669"/>
    <property type="project" value="GOC"/>
</dbReference>
<dbReference type="GO" id="GO:0005634">
    <property type="term" value="C:nucleus"/>
    <property type="evidence" value="ECO:0000250"/>
    <property type="project" value="UniProtKB"/>
</dbReference>
<dbReference type="GO" id="GO:0048471">
    <property type="term" value="C:perinuclear region of cytoplasm"/>
    <property type="evidence" value="ECO:0000250"/>
    <property type="project" value="UniProtKB"/>
</dbReference>
<dbReference type="GO" id="GO:0005886">
    <property type="term" value="C:plasma membrane"/>
    <property type="evidence" value="ECO:0007669"/>
    <property type="project" value="UniProtKB-SubCell"/>
</dbReference>
<dbReference type="GO" id="GO:0004016">
    <property type="term" value="F:adenylate cyclase activity"/>
    <property type="evidence" value="ECO:0000250"/>
    <property type="project" value="UniProtKB"/>
</dbReference>
<dbReference type="GO" id="GO:0005524">
    <property type="term" value="F:ATP binding"/>
    <property type="evidence" value="ECO:0007669"/>
    <property type="project" value="UniProtKB-KW"/>
</dbReference>
<dbReference type="GO" id="GO:0071890">
    <property type="term" value="F:bicarbonate binding"/>
    <property type="evidence" value="ECO:0000250"/>
    <property type="project" value="UniProtKB"/>
</dbReference>
<dbReference type="GO" id="GO:0000287">
    <property type="term" value="F:magnesium ion binding"/>
    <property type="evidence" value="ECO:0007669"/>
    <property type="project" value="InterPro"/>
</dbReference>
<dbReference type="GO" id="GO:0006171">
    <property type="term" value="P:cAMP biosynthetic process"/>
    <property type="evidence" value="ECO:0000250"/>
    <property type="project" value="UniProtKB"/>
</dbReference>
<dbReference type="GO" id="GO:0003351">
    <property type="term" value="P:epithelial cilium movement involved in extracellular fluid movement"/>
    <property type="evidence" value="ECO:0000250"/>
    <property type="project" value="UniProtKB"/>
</dbReference>
<dbReference type="GO" id="GO:0035556">
    <property type="term" value="P:intracellular signal transduction"/>
    <property type="evidence" value="ECO:0007669"/>
    <property type="project" value="InterPro"/>
</dbReference>
<dbReference type="GO" id="GO:0007283">
    <property type="term" value="P:spermatogenesis"/>
    <property type="evidence" value="ECO:0007669"/>
    <property type="project" value="InterPro"/>
</dbReference>
<dbReference type="CDD" id="cd07302">
    <property type="entry name" value="CHD"/>
    <property type="match status" value="2"/>
</dbReference>
<dbReference type="FunFam" id="3.30.70.1230:FF:000017">
    <property type="entry name" value="Adenylate cyclase type 10"/>
    <property type="match status" value="1"/>
</dbReference>
<dbReference type="FunFam" id="3.30.70.1230:FF:000021">
    <property type="entry name" value="Adenylate cyclase type 10"/>
    <property type="match status" value="1"/>
</dbReference>
<dbReference type="FunFam" id="3.40.50.300:FF:001623">
    <property type="entry name" value="Adenylate cyclase type 10"/>
    <property type="match status" value="1"/>
</dbReference>
<dbReference type="Gene3D" id="3.30.70.1230">
    <property type="entry name" value="Nucleotide cyclase"/>
    <property type="match status" value="2"/>
</dbReference>
<dbReference type="Gene3D" id="3.40.50.300">
    <property type="entry name" value="P-loop containing nucleotide triphosphate hydrolases"/>
    <property type="match status" value="1"/>
</dbReference>
<dbReference type="InterPro" id="IPR001054">
    <property type="entry name" value="A/G_cyclase"/>
</dbReference>
<dbReference type="InterPro" id="IPR016577">
    <property type="entry name" value="Adenylate_cyclase_typ10"/>
</dbReference>
<dbReference type="InterPro" id="IPR029787">
    <property type="entry name" value="Nucleotide_cyclase"/>
</dbReference>
<dbReference type="InterPro" id="IPR027417">
    <property type="entry name" value="P-loop_NTPase"/>
</dbReference>
<dbReference type="PANTHER" id="PTHR16305:SF32">
    <property type="entry name" value="ADENYLATE CYCLASE TYPE 10"/>
    <property type="match status" value="1"/>
</dbReference>
<dbReference type="PANTHER" id="PTHR16305">
    <property type="entry name" value="TESTICULAR SOLUBLE ADENYLYL CYCLASE"/>
    <property type="match status" value="1"/>
</dbReference>
<dbReference type="Pfam" id="PF00211">
    <property type="entry name" value="Guanylate_cyc"/>
    <property type="match status" value="2"/>
</dbReference>
<dbReference type="PIRSF" id="PIRSF011131">
    <property type="entry name" value="Soluble_adenylyl_cyclase"/>
    <property type="match status" value="1"/>
</dbReference>
<dbReference type="SMART" id="SM00044">
    <property type="entry name" value="CYCc"/>
    <property type="match status" value="1"/>
</dbReference>
<dbReference type="SUPFAM" id="SSF55073">
    <property type="entry name" value="Nucleotide cyclase"/>
    <property type="match status" value="2"/>
</dbReference>
<dbReference type="SUPFAM" id="SSF52540">
    <property type="entry name" value="P-loop containing nucleoside triphosphate hydrolases"/>
    <property type="match status" value="1"/>
</dbReference>
<dbReference type="PROSITE" id="PS50125">
    <property type="entry name" value="GUANYLATE_CYCLASE_2"/>
    <property type="match status" value="2"/>
</dbReference>
<gene>
    <name type="primary">ADCY10</name>
    <name type="synonym">SAC</name>
</gene>
<comment type="function">
    <text evidence="1 2">Catalyzes the formation of the signaling molecule cAMP. May function as sensor that mediates responses to changes in cellular bicarbonate and CO(2) levels (By similarity). Has a critical role in mammalian spermatogenesis by producing the cAMP which regulates cAMP-responsive nuclear factors indispensable for sperm maturation in the epididymis. Induces capacitation, the maturational process that sperm undergo prior to fertilization (By similarity). Involved in ciliary beat regulation (By similarity).</text>
</comment>
<comment type="catalytic activity">
    <reaction evidence="2">
        <text>ATP = 3',5'-cyclic AMP + diphosphate</text>
        <dbReference type="Rhea" id="RHEA:15389"/>
        <dbReference type="ChEBI" id="CHEBI:30616"/>
        <dbReference type="ChEBI" id="CHEBI:33019"/>
        <dbReference type="ChEBI" id="CHEBI:58165"/>
        <dbReference type="EC" id="4.6.1.1"/>
    </reaction>
</comment>
<comment type="cofactor">
    <cofactor evidence="2">
        <name>Mg(2+)</name>
        <dbReference type="ChEBI" id="CHEBI:18420"/>
    </cofactor>
    <cofactor evidence="2">
        <name>Mn(2+)</name>
        <dbReference type="ChEBI" id="CHEBI:29035"/>
    </cofactor>
    <text evidence="2">Binds 2 magnesium ions per subunit. Is also active with manganese (in vitro).</text>
</comment>
<comment type="activity regulation">
    <text evidence="2">Activated by manganese or magnesium ions. In the presence of magnesium ions, the enzyme is activated by bicarbonate. Calcium mildly increases the enzyme activity, also in the presence of magnesium ions.</text>
</comment>
<comment type="subcellular location">
    <subcellularLocation>
        <location evidence="2">Cell membrane</location>
        <topology evidence="2">Peripheral membrane protein</topology>
        <orientation evidence="2">Cytoplasmic side</orientation>
    </subcellularLocation>
    <subcellularLocation>
        <location evidence="2">Cytoplasm</location>
        <location evidence="2">Cytoskeleton</location>
    </subcellularLocation>
    <subcellularLocation>
        <location evidence="2">Cytoplasm</location>
        <location evidence="2">Perinuclear region</location>
    </subcellularLocation>
    <subcellularLocation>
        <location evidence="2">Nucleus</location>
    </subcellularLocation>
    <subcellularLocation>
        <location evidence="2">Cell projection</location>
        <location evidence="2">Cilium</location>
    </subcellularLocation>
    <subcellularLocation>
        <location evidence="2">Cytoplasm</location>
    </subcellularLocation>
    <text evidence="2">Distributed to subcellular compartments containing cAMP targets. Found as a plasma membrane-associated protein, protein concentrated in the perinuclear region and protein colocalized with actin or tubulin.</text>
</comment>
<comment type="domain">
    <text evidence="2">The N-terminal guanylate cyclase domains are required for enzyme activity. Fragments containing the first 470 amino acid residues are fully active.</text>
</comment>
<comment type="similarity">
    <text evidence="3">Belongs to the adenylyl cyclase class-4/guanylyl cyclase family.</text>
</comment>
<protein>
    <recommendedName>
        <fullName>Adenylate cyclase type 10</fullName>
        <ecNumber>4.6.1.1</ecNumber>
    </recommendedName>
    <alternativeName>
        <fullName>Germ cell soluble adenylyl cyclase</fullName>
        <shortName>sAC</shortName>
    </alternativeName>
    <alternativeName>
        <fullName>Testicular soluble adenylyl cyclase</fullName>
    </alternativeName>
</protein>
<keyword id="KW-0067">ATP-binding</keyword>
<keyword id="KW-0115">cAMP biosynthesis</keyword>
<keyword id="KW-1003">Cell membrane</keyword>
<keyword id="KW-0966">Cell projection</keyword>
<keyword id="KW-0963">Cytoplasm</keyword>
<keyword id="KW-0206">Cytoskeleton</keyword>
<keyword id="KW-0456">Lyase</keyword>
<keyword id="KW-0460">Magnesium</keyword>
<keyword id="KW-0472">Membrane</keyword>
<keyword id="KW-0479">Metal-binding</keyword>
<keyword id="KW-0547">Nucleotide-binding</keyword>
<keyword id="KW-0539">Nucleus</keyword>
<keyword id="KW-1185">Reference proteome</keyword>
<keyword id="KW-0677">Repeat</keyword>
<proteinExistence type="evidence at transcript level"/>
<name>ADCYA_RABIT</name>
<reference key="1">
    <citation type="journal article" date="2004" name="Dev. Genes Evol.">
        <title>Conservation of functional domain structure in bicarbonate-regulated 'soluble' adenylyl cyclases in bacteria and eukaryotes.</title>
        <authorList>
            <person name="Kobayashi M."/>
            <person name="Buck J."/>
            <person name="Levin L.R."/>
        </authorList>
    </citation>
    <scope>NUCLEOTIDE SEQUENCE [MRNA]</scope>
    <source>
        <tissue>Testis</tissue>
    </source>
</reference>
<evidence type="ECO:0000250" key="1">
    <source>
        <dbReference type="UniProtKB" id="Q8C0T9"/>
    </source>
</evidence>
<evidence type="ECO:0000250" key="2">
    <source>
        <dbReference type="UniProtKB" id="Q96PN6"/>
    </source>
</evidence>
<evidence type="ECO:0000255" key="3">
    <source>
        <dbReference type="PROSITE-ProRule" id="PRU00099"/>
    </source>
</evidence>
<sequence>MNTRKEELQDRAIVRIAAHLPDLIVYGDFSPQRPSVDYFDGVLMFVDISGFTAMTEKFSTAMYMDRGAEQLVEILNYYISAIVEKVLIFGGDILKFAGDALLALWKVERKQLKNIITVVIKCSLEIHGLFGTQESEEGLDIRVKIGLAAGHISMLVFGDETRNHFLVIGQAVDDVRLAQNMARMNDVILSPNCWQLCDRSMIEIERIPDQRAVKVNFLKPPPSFNFDEFFNKCMTFMDYYPSGDHKNLLRLACMLESDPDLELSLQKYVMESILKQIDDKQLRGYLSELRPVTIVFVNLMFQDQNKAEVIGSAIQDACVHISSVLKVFRGQINKVFMFDKGCSFLCVFGFPGEKAPDEVTHALESAVDIFDFCSQVHKIHTVSIGVASGIVFCGIVGHTVRHEYTVIGQKVNIAARMMMYYPGIVTCDSVTYNGSNLPPYFFKELPKKLMKGVGDSGPVYQCLGLNEKVMFGMAYLTCNRNEGYPLLGRDKEIKYFMCTMKEFLMSNCSRVLMYEGLSGFGKSRILMEIEYLAQGENHRTIAIALTKVSFHQNFYTIQILMANVLGLDTCKHYKERQTNLQNKVKTLLDEKFHCLLNDIFHVQFPISREISKMSTFRKQKQLEALFMKILEQTVKEERIIFIIDEAQFVDYASWIFMEKLIRTVPIFIIMSLSPFTEIPCAAASAIMKNRNTTYVTLGAVQPNDIRNKVCLDLNVSSIPKELDLYLVEGSCGIPFYCEELVKNLDHHRVLVFQQMETEEKTKVTWNNLFKNFIKPTEEFKMSGLGNEEGTEEICKLASGVRLKNLSPPASLKEISLVQLDSMSLSHQMLVRCAAIIGLTFTTELLFEILPCWNMKMMIKALATLVESNIFDCFRDGKDLRLALKQNAASFEVHNRSLSLQPTEGIAHGEEEELRELESEVIECHIIRFCKPMMQKTAYELWLKDQKKAMHLKCARFLEENAHRCDHCRSGDFIPYHHFTVDIRLNTLDMDTIKKMATSHGFETEEEIKISRAGIPKNSELFSENLSPEEIGERILGFFDVILTKMKTSKEDIIPLESCQCEEILEIVILPLAQHFLALGENNKALYYFLEITSAYLTLGDNYMAYMYLNEGERLLKTLKKEKSWSQTFESATFYSLKGQVCFNMGQMVLAKKMLRKALKLLNRIFPYNLISLFLHTHMEKNRHFHYVTQQAQESSPPGKKRLAHLYQQTACFSLLWQIYSLNYFFHHKYYGHLAAMMELNTALETQNDFQIIKAYLDYAMYHHLAGYQGVWFKYEVKAMEQIFNLPLKGEGIEIVAYVAGKLSYIKLMMGYLDLAIELGARAHKMWALLQNPNQHYVVLCRLSKSLFLKNRYKHLIQMLRRLWDLSVAEGHIISKAFFYLVCLDIMLYSGFVYRTFEECLEFIIQNEDNRILKFQSGLLLGLYSSIAIWYGRLQEWDNFYVFSNRAKTLVSRRTPTILYYDGVSRYMEGQVLQLQKQIEEQSETAQDSGVELLKSLESLVAQNTTGPVFYPRLYHLMAYICILMGDGQNCDLFLNTALKLSEIQGNVLEKCWLNMSKEWWYSNCTLTEDQWLHTILSLPAWEKIVSGKVNIHDVQKNKFLMRVNILDNPF</sequence>